<comment type="function">
    <text evidence="1">Binds 16S rRNA, required for the assembly of 30S particles.</text>
</comment>
<comment type="cofactor">
    <cofactor evidence="1">
        <name>Zn(2+)</name>
        <dbReference type="ChEBI" id="CHEBI:29105"/>
    </cofactor>
    <text evidence="1">Binds 1 zinc ion per subunit.</text>
</comment>
<comment type="subunit">
    <text evidence="1">Part of the 30S ribosomal subunit.</text>
</comment>
<comment type="similarity">
    <text evidence="1">Belongs to the universal ribosomal protein uS14 family. Zinc-binding uS14 subfamily.</text>
</comment>
<name>RS14Z_METAC</name>
<gene>
    <name evidence="1" type="primary">rps14</name>
    <name type="ordered locus">MA_1086</name>
</gene>
<sequence>MTETIKKSGRGVNECKRCGRKQGLVRKYDIYLCRHCFREIAHEMGFEKYS</sequence>
<dbReference type="EMBL" id="AE010299">
    <property type="protein sequence ID" value="AAM04511.1"/>
    <property type="molecule type" value="Genomic_DNA"/>
</dbReference>
<dbReference type="RefSeq" id="WP_011021115.1">
    <property type="nucleotide sequence ID" value="NC_003552.1"/>
</dbReference>
<dbReference type="SMR" id="Q8TRT3"/>
<dbReference type="FunCoup" id="Q8TRT3">
    <property type="interactions" value="137"/>
</dbReference>
<dbReference type="STRING" id="188937.MA_1086"/>
<dbReference type="EnsemblBacteria" id="AAM04511">
    <property type="protein sequence ID" value="AAM04511"/>
    <property type="gene ID" value="MA_1086"/>
</dbReference>
<dbReference type="GeneID" id="1472976"/>
<dbReference type="KEGG" id="mac:MA_1086"/>
<dbReference type="HOGENOM" id="CLU_177289_2_2_2"/>
<dbReference type="InParanoid" id="Q8TRT3"/>
<dbReference type="OrthoDB" id="5615at2157"/>
<dbReference type="PhylomeDB" id="Q8TRT3"/>
<dbReference type="Proteomes" id="UP000002487">
    <property type="component" value="Chromosome"/>
</dbReference>
<dbReference type="GO" id="GO:0022627">
    <property type="term" value="C:cytosolic small ribosomal subunit"/>
    <property type="evidence" value="ECO:0000318"/>
    <property type="project" value="GO_Central"/>
</dbReference>
<dbReference type="GO" id="GO:0019843">
    <property type="term" value="F:rRNA binding"/>
    <property type="evidence" value="ECO:0007669"/>
    <property type="project" value="UniProtKB-UniRule"/>
</dbReference>
<dbReference type="GO" id="GO:0003735">
    <property type="term" value="F:structural constituent of ribosome"/>
    <property type="evidence" value="ECO:0000318"/>
    <property type="project" value="GO_Central"/>
</dbReference>
<dbReference type="GO" id="GO:0008270">
    <property type="term" value="F:zinc ion binding"/>
    <property type="evidence" value="ECO:0000318"/>
    <property type="project" value="GO_Central"/>
</dbReference>
<dbReference type="GO" id="GO:0002181">
    <property type="term" value="P:cytoplasmic translation"/>
    <property type="evidence" value="ECO:0000318"/>
    <property type="project" value="GO_Central"/>
</dbReference>
<dbReference type="FunFam" id="4.10.830.10:FF:000002">
    <property type="entry name" value="40S ribosomal protein S29"/>
    <property type="match status" value="1"/>
</dbReference>
<dbReference type="Gene3D" id="4.10.830.10">
    <property type="entry name" value="30s Ribosomal Protein S14, Chain N"/>
    <property type="match status" value="1"/>
</dbReference>
<dbReference type="HAMAP" id="MF_01364_A">
    <property type="entry name" value="Ribosomal_uS14_2_A"/>
    <property type="match status" value="1"/>
</dbReference>
<dbReference type="InterPro" id="IPR001209">
    <property type="entry name" value="Ribosomal_uS14"/>
</dbReference>
<dbReference type="InterPro" id="IPR023676">
    <property type="entry name" value="Ribosomal_uS14_arc"/>
</dbReference>
<dbReference type="InterPro" id="IPR018271">
    <property type="entry name" value="Ribosomal_uS14_CS"/>
</dbReference>
<dbReference type="InterPro" id="IPR039744">
    <property type="entry name" value="RIbosomal_uS14_euk_arc"/>
</dbReference>
<dbReference type="InterPro" id="IPR043140">
    <property type="entry name" value="Ribosomal_uS14_sf"/>
</dbReference>
<dbReference type="NCBIfam" id="NF004424">
    <property type="entry name" value="PRK05766.1"/>
    <property type="match status" value="1"/>
</dbReference>
<dbReference type="PANTHER" id="PTHR12010">
    <property type="entry name" value="40S RIBOSOMAL PROTEIN S29"/>
    <property type="match status" value="1"/>
</dbReference>
<dbReference type="PANTHER" id="PTHR12010:SF2">
    <property type="entry name" value="40S RIBOSOMAL PROTEIN S29"/>
    <property type="match status" value="1"/>
</dbReference>
<dbReference type="Pfam" id="PF00253">
    <property type="entry name" value="Ribosomal_S14"/>
    <property type="match status" value="1"/>
</dbReference>
<dbReference type="SUPFAM" id="SSF57716">
    <property type="entry name" value="Glucocorticoid receptor-like (DNA-binding domain)"/>
    <property type="match status" value="1"/>
</dbReference>
<dbReference type="PROSITE" id="PS00527">
    <property type="entry name" value="RIBOSOMAL_S14"/>
    <property type="match status" value="1"/>
</dbReference>
<accession>Q8TRT3</accession>
<reference key="1">
    <citation type="journal article" date="2002" name="Genome Res.">
        <title>The genome of Methanosarcina acetivorans reveals extensive metabolic and physiological diversity.</title>
        <authorList>
            <person name="Galagan J.E."/>
            <person name="Nusbaum C."/>
            <person name="Roy A."/>
            <person name="Endrizzi M.G."/>
            <person name="Macdonald P."/>
            <person name="FitzHugh W."/>
            <person name="Calvo S."/>
            <person name="Engels R."/>
            <person name="Smirnov S."/>
            <person name="Atnoor D."/>
            <person name="Brown A."/>
            <person name="Allen N."/>
            <person name="Naylor J."/>
            <person name="Stange-Thomann N."/>
            <person name="DeArellano K."/>
            <person name="Johnson R."/>
            <person name="Linton L."/>
            <person name="McEwan P."/>
            <person name="McKernan K."/>
            <person name="Talamas J."/>
            <person name="Tirrell A."/>
            <person name="Ye W."/>
            <person name="Zimmer A."/>
            <person name="Barber R.D."/>
            <person name="Cann I."/>
            <person name="Graham D.E."/>
            <person name="Grahame D.A."/>
            <person name="Guss A.M."/>
            <person name="Hedderich R."/>
            <person name="Ingram-Smith C."/>
            <person name="Kuettner H.C."/>
            <person name="Krzycki J.A."/>
            <person name="Leigh J.A."/>
            <person name="Li W."/>
            <person name="Liu J."/>
            <person name="Mukhopadhyay B."/>
            <person name="Reeve J.N."/>
            <person name="Smith K."/>
            <person name="Springer T.A."/>
            <person name="Umayam L.A."/>
            <person name="White O."/>
            <person name="White R.H."/>
            <person name="de Macario E.C."/>
            <person name="Ferry J.G."/>
            <person name="Jarrell K.F."/>
            <person name="Jing H."/>
            <person name="Macario A.J.L."/>
            <person name="Paulsen I.T."/>
            <person name="Pritchett M."/>
            <person name="Sowers K.R."/>
            <person name="Swanson R.V."/>
            <person name="Zinder S.H."/>
            <person name="Lander E."/>
            <person name="Metcalf W.W."/>
            <person name="Birren B."/>
        </authorList>
    </citation>
    <scope>NUCLEOTIDE SEQUENCE [LARGE SCALE GENOMIC DNA]</scope>
    <source>
        <strain>ATCC 35395 / DSM 2834 / JCM 12185 / C2A</strain>
    </source>
</reference>
<organism>
    <name type="scientific">Methanosarcina acetivorans (strain ATCC 35395 / DSM 2834 / JCM 12185 / C2A)</name>
    <dbReference type="NCBI Taxonomy" id="188937"/>
    <lineage>
        <taxon>Archaea</taxon>
        <taxon>Methanobacteriati</taxon>
        <taxon>Methanobacteriota</taxon>
        <taxon>Stenosarchaea group</taxon>
        <taxon>Methanomicrobia</taxon>
        <taxon>Methanosarcinales</taxon>
        <taxon>Methanosarcinaceae</taxon>
        <taxon>Methanosarcina</taxon>
    </lineage>
</organism>
<protein>
    <recommendedName>
        <fullName evidence="1">Small ribosomal subunit protein uS14</fullName>
    </recommendedName>
    <alternativeName>
        <fullName evidence="2">30S ribosomal protein S14 type Z</fullName>
    </alternativeName>
</protein>
<proteinExistence type="inferred from homology"/>
<feature type="chain" id="PRO_0000269162" description="Small ribosomal subunit protein uS14">
    <location>
        <begin position="1"/>
        <end position="50"/>
    </location>
</feature>
<feature type="binding site" evidence="1">
    <location>
        <position position="15"/>
    </location>
    <ligand>
        <name>Zn(2+)</name>
        <dbReference type="ChEBI" id="CHEBI:29105"/>
    </ligand>
</feature>
<feature type="binding site" evidence="1">
    <location>
        <position position="18"/>
    </location>
    <ligand>
        <name>Zn(2+)</name>
        <dbReference type="ChEBI" id="CHEBI:29105"/>
    </ligand>
</feature>
<feature type="binding site" evidence="1">
    <location>
        <position position="33"/>
    </location>
    <ligand>
        <name>Zn(2+)</name>
        <dbReference type="ChEBI" id="CHEBI:29105"/>
    </ligand>
</feature>
<feature type="binding site" evidence="1">
    <location>
        <position position="36"/>
    </location>
    <ligand>
        <name>Zn(2+)</name>
        <dbReference type="ChEBI" id="CHEBI:29105"/>
    </ligand>
</feature>
<evidence type="ECO:0000255" key="1">
    <source>
        <dbReference type="HAMAP-Rule" id="MF_01364"/>
    </source>
</evidence>
<evidence type="ECO:0000305" key="2"/>
<keyword id="KW-0479">Metal-binding</keyword>
<keyword id="KW-1185">Reference proteome</keyword>
<keyword id="KW-0687">Ribonucleoprotein</keyword>
<keyword id="KW-0689">Ribosomal protein</keyword>
<keyword id="KW-0694">RNA-binding</keyword>
<keyword id="KW-0699">rRNA-binding</keyword>
<keyword id="KW-0862">Zinc</keyword>